<feature type="chain" id="PRO_1000008252" description="Translation initiation factor IF-2">
    <location>
        <begin position="1"/>
        <end position="941"/>
    </location>
</feature>
<feature type="domain" description="tr-type G">
    <location>
        <begin position="440"/>
        <end position="609"/>
    </location>
</feature>
<feature type="region of interest" description="Disordered" evidence="3">
    <location>
        <begin position="61"/>
        <end position="204"/>
    </location>
</feature>
<feature type="region of interest" description="Disordered" evidence="3">
    <location>
        <begin position="249"/>
        <end position="274"/>
    </location>
</feature>
<feature type="region of interest" description="G1" evidence="1">
    <location>
        <begin position="449"/>
        <end position="456"/>
    </location>
</feature>
<feature type="region of interest" description="G2" evidence="1">
    <location>
        <begin position="474"/>
        <end position="478"/>
    </location>
</feature>
<feature type="region of interest" description="G3" evidence="1">
    <location>
        <begin position="495"/>
        <end position="498"/>
    </location>
</feature>
<feature type="region of interest" description="G4" evidence="1">
    <location>
        <begin position="549"/>
        <end position="552"/>
    </location>
</feature>
<feature type="region of interest" description="G5" evidence="1">
    <location>
        <begin position="585"/>
        <end position="587"/>
    </location>
</feature>
<feature type="compositionally biased region" description="Basic and acidic residues" evidence="3">
    <location>
        <begin position="147"/>
        <end position="163"/>
    </location>
</feature>
<feature type="compositionally biased region" description="Low complexity" evidence="3">
    <location>
        <begin position="164"/>
        <end position="179"/>
    </location>
</feature>
<feature type="compositionally biased region" description="Basic and acidic residues" evidence="3">
    <location>
        <begin position="180"/>
        <end position="204"/>
    </location>
</feature>
<feature type="binding site" evidence="2">
    <location>
        <begin position="449"/>
        <end position="456"/>
    </location>
    <ligand>
        <name>GTP</name>
        <dbReference type="ChEBI" id="CHEBI:37565"/>
    </ligand>
</feature>
<feature type="binding site" evidence="2">
    <location>
        <begin position="495"/>
        <end position="499"/>
    </location>
    <ligand>
        <name>GTP</name>
        <dbReference type="ChEBI" id="CHEBI:37565"/>
    </ligand>
</feature>
<feature type="binding site" evidence="2">
    <location>
        <begin position="549"/>
        <end position="552"/>
    </location>
    <ligand>
        <name>GTP</name>
        <dbReference type="ChEBI" id="CHEBI:37565"/>
    </ligand>
</feature>
<evidence type="ECO:0000250" key="1"/>
<evidence type="ECO:0000255" key="2">
    <source>
        <dbReference type="HAMAP-Rule" id="MF_00100"/>
    </source>
</evidence>
<evidence type="ECO:0000256" key="3">
    <source>
        <dbReference type="SAM" id="MobiDB-lite"/>
    </source>
</evidence>
<sequence length="941" mass="105210">MSGMVDLKEFLAELGKTQKELKNVIEQAKDIGLELRTNSKMTPEEAEKLYKYIVDGIKEQIQSNRPIKKDKEGAATPKASNKKTSKTPKKEEAKSQLKPKNTKKKKKEAPTPILKKKGIEIVDTFENKTPPVENAPKVVTPSQSQIEKAKQKLQEIQKSREALNKLTQSNTNNANNANSAKKEISEVAKQEREQEHLDNKRRENIKRYTGFRVIKRNDDENETQNSVTENKKPTQSAVAIFEDIKKEWQEKDKETKKAKKSNKPKAIPAAKNNKSHKIDFSDARDFKGNNDIYDDETDEILLFDLHEQDNLNEEEEKEIRQNINDRARIQRKNPWMNEGGIKRQSKKKRVFRNDNSQKVVQSVISIPEEVCVYEFAQKANLNLADVIKTLFNLGLMVTKNDFLDKDSIEILAEEFHLEISVQNTLEEFEVEEVLEGVKKERPPVVTIMGHVDHGKTSLLDKIRDKRVAHTEAGGITQHIGAYMVEKNGKWVSFIDTPGHEAFSQMRNRGAQVTDIAVIVIAADDGVKQQTVEALEHAKVANVPVIFAMNKMDKPNVNLDKLKAECAELGYNPVDWGGEYEFIPISAKTGDGIDNLLETILIQADIMELKAIEEGRARAVVLEGSVEKGRGAVATVIVQSGTLSVGDSFFAETAFGKVRTMTDDQGKSIQNLKPSMVALITGLSEVPPAGSVLIGVENDSIARLQAQKRATYLRQKALSKSTKVSFDELSEMVANKELKNIPVVIKADTQGSLEAIKNSLLELNNEEVAIQVIHSGVGGITENDLSLVASSEHAVILGFNIRPTGNVKNKAKEYNVSIKTYTVIYALIEEMRSLLLGLMSPIIEEEHTGQAEVRETFNIPKVGTIAGCVVSDGVITRGIKVRLIRDGVVIHTGEILSLKRFKDDAKEVSKGYECGIMLENYNEIKVGDVFETYKEIHKKRTL</sequence>
<dbReference type="EMBL" id="AM260522">
    <property type="protein sequence ID" value="CAJ99918.1"/>
    <property type="molecule type" value="Genomic_DNA"/>
</dbReference>
<dbReference type="RefSeq" id="WP_011578025.1">
    <property type="nucleotide sequence ID" value="NC_008229.1"/>
</dbReference>
<dbReference type="SMR" id="Q17WQ8"/>
<dbReference type="STRING" id="382638.Hac_1159"/>
<dbReference type="GeneID" id="31758510"/>
<dbReference type="KEGG" id="hac:Hac_1159"/>
<dbReference type="eggNOG" id="COG0532">
    <property type="taxonomic scope" value="Bacteria"/>
</dbReference>
<dbReference type="HOGENOM" id="CLU_006301_4_1_7"/>
<dbReference type="OrthoDB" id="9811804at2"/>
<dbReference type="BioCyc" id="HACI382638:HAC_RS04990-MONOMER"/>
<dbReference type="Proteomes" id="UP000000775">
    <property type="component" value="Chromosome"/>
</dbReference>
<dbReference type="GO" id="GO:0005829">
    <property type="term" value="C:cytosol"/>
    <property type="evidence" value="ECO:0007669"/>
    <property type="project" value="TreeGrafter"/>
</dbReference>
<dbReference type="GO" id="GO:0005525">
    <property type="term" value="F:GTP binding"/>
    <property type="evidence" value="ECO:0007669"/>
    <property type="project" value="UniProtKB-KW"/>
</dbReference>
<dbReference type="GO" id="GO:0003924">
    <property type="term" value="F:GTPase activity"/>
    <property type="evidence" value="ECO:0007669"/>
    <property type="project" value="UniProtKB-UniRule"/>
</dbReference>
<dbReference type="GO" id="GO:0003743">
    <property type="term" value="F:translation initiation factor activity"/>
    <property type="evidence" value="ECO:0007669"/>
    <property type="project" value="UniProtKB-UniRule"/>
</dbReference>
<dbReference type="CDD" id="cd01887">
    <property type="entry name" value="IF2_eIF5B"/>
    <property type="match status" value="1"/>
</dbReference>
<dbReference type="CDD" id="cd03702">
    <property type="entry name" value="IF2_mtIF2_II"/>
    <property type="match status" value="1"/>
</dbReference>
<dbReference type="CDD" id="cd03692">
    <property type="entry name" value="mtIF2_IVc"/>
    <property type="match status" value="1"/>
</dbReference>
<dbReference type="FunFam" id="2.40.30.10:FF:000008">
    <property type="entry name" value="Translation initiation factor IF-2"/>
    <property type="match status" value="1"/>
</dbReference>
<dbReference type="FunFam" id="2.40.30.10:FF:000054">
    <property type="entry name" value="Translation initiation factor IF-2"/>
    <property type="match status" value="1"/>
</dbReference>
<dbReference type="FunFam" id="3.40.50.10050:FF:000001">
    <property type="entry name" value="Translation initiation factor IF-2"/>
    <property type="match status" value="1"/>
</dbReference>
<dbReference type="FunFam" id="3.40.50.300:FF:000019">
    <property type="entry name" value="Translation initiation factor IF-2"/>
    <property type="match status" value="1"/>
</dbReference>
<dbReference type="Gene3D" id="3.40.50.300">
    <property type="entry name" value="P-loop containing nucleotide triphosphate hydrolases"/>
    <property type="match status" value="1"/>
</dbReference>
<dbReference type="Gene3D" id="2.40.30.10">
    <property type="entry name" value="Translation factors"/>
    <property type="match status" value="2"/>
</dbReference>
<dbReference type="Gene3D" id="3.40.50.10050">
    <property type="entry name" value="Translation initiation factor IF- 2, domain 3"/>
    <property type="match status" value="1"/>
</dbReference>
<dbReference type="HAMAP" id="MF_00100_B">
    <property type="entry name" value="IF_2_B"/>
    <property type="match status" value="1"/>
</dbReference>
<dbReference type="InterPro" id="IPR053905">
    <property type="entry name" value="EF-G-like_DII"/>
</dbReference>
<dbReference type="InterPro" id="IPR004161">
    <property type="entry name" value="EFTu-like_2"/>
</dbReference>
<dbReference type="InterPro" id="IPR044145">
    <property type="entry name" value="IF2_II"/>
</dbReference>
<dbReference type="InterPro" id="IPR006847">
    <property type="entry name" value="IF2_N"/>
</dbReference>
<dbReference type="InterPro" id="IPR027417">
    <property type="entry name" value="P-loop_NTPase"/>
</dbReference>
<dbReference type="InterPro" id="IPR005225">
    <property type="entry name" value="Small_GTP-bd"/>
</dbReference>
<dbReference type="InterPro" id="IPR000795">
    <property type="entry name" value="T_Tr_GTP-bd_dom"/>
</dbReference>
<dbReference type="InterPro" id="IPR000178">
    <property type="entry name" value="TF_IF2_bacterial-like"/>
</dbReference>
<dbReference type="InterPro" id="IPR015760">
    <property type="entry name" value="TIF_IF2"/>
</dbReference>
<dbReference type="InterPro" id="IPR023115">
    <property type="entry name" value="TIF_IF2_dom3"/>
</dbReference>
<dbReference type="InterPro" id="IPR036925">
    <property type="entry name" value="TIF_IF2_dom3_sf"/>
</dbReference>
<dbReference type="InterPro" id="IPR009000">
    <property type="entry name" value="Transl_B-barrel_sf"/>
</dbReference>
<dbReference type="NCBIfam" id="TIGR00487">
    <property type="entry name" value="IF-2"/>
    <property type="match status" value="1"/>
</dbReference>
<dbReference type="NCBIfam" id="TIGR00231">
    <property type="entry name" value="small_GTP"/>
    <property type="match status" value="1"/>
</dbReference>
<dbReference type="PANTHER" id="PTHR43381:SF5">
    <property type="entry name" value="TR-TYPE G DOMAIN-CONTAINING PROTEIN"/>
    <property type="match status" value="1"/>
</dbReference>
<dbReference type="PANTHER" id="PTHR43381">
    <property type="entry name" value="TRANSLATION INITIATION FACTOR IF-2-RELATED"/>
    <property type="match status" value="1"/>
</dbReference>
<dbReference type="Pfam" id="PF22042">
    <property type="entry name" value="EF-G_D2"/>
    <property type="match status" value="1"/>
</dbReference>
<dbReference type="Pfam" id="PF00009">
    <property type="entry name" value="GTP_EFTU"/>
    <property type="match status" value="1"/>
</dbReference>
<dbReference type="Pfam" id="PF03144">
    <property type="entry name" value="GTP_EFTU_D2"/>
    <property type="match status" value="1"/>
</dbReference>
<dbReference type="Pfam" id="PF11987">
    <property type="entry name" value="IF-2"/>
    <property type="match status" value="1"/>
</dbReference>
<dbReference type="Pfam" id="PF04760">
    <property type="entry name" value="IF2_N"/>
    <property type="match status" value="1"/>
</dbReference>
<dbReference type="SUPFAM" id="SSF52156">
    <property type="entry name" value="Initiation factor IF2/eIF5b, domain 3"/>
    <property type="match status" value="1"/>
</dbReference>
<dbReference type="SUPFAM" id="SSF52540">
    <property type="entry name" value="P-loop containing nucleoside triphosphate hydrolases"/>
    <property type="match status" value="1"/>
</dbReference>
<dbReference type="SUPFAM" id="SSF50447">
    <property type="entry name" value="Translation proteins"/>
    <property type="match status" value="2"/>
</dbReference>
<dbReference type="PROSITE" id="PS51722">
    <property type="entry name" value="G_TR_2"/>
    <property type="match status" value="1"/>
</dbReference>
<dbReference type="PROSITE" id="PS01176">
    <property type="entry name" value="IF2"/>
    <property type="match status" value="1"/>
</dbReference>
<reference key="1">
    <citation type="journal article" date="2006" name="PLoS Genet.">
        <title>Who ate whom? Adaptive Helicobacter genomic changes that accompanied a host jump from early humans to large felines.</title>
        <authorList>
            <person name="Eppinger M."/>
            <person name="Baar C."/>
            <person name="Linz B."/>
            <person name="Raddatz G."/>
            <person name="Lanz C."/>
            <person name="Keller H."/>
            <person name="Morelli G."/>
            <person name="Gressmann H."/>
            <person name="Achtman M."/>
            <person name="Schuster S.C."/>
        </authorList>
    </citation>
    <scope>NUCLEOTIDE SEQUENCE [LARGE SCALE GENOMIC DNA]</scope>
    <source>
        <strain>Sheeba</strain>
    </source>
</reference>
<organism>
    <name type="scientific">Helicobacter acinonychis (strain Sheeba)</name>
    <dbReference type="NCBI Taxonomy" id="382638"/>
    <lineage>
        <taxon>Bacteria</taxon>
        <taxon>Pseudomonadati</taxon>
        <taxon>Campylobacterota</taxon>
        <taxon>Epsilonproteobacteria</taxon>
        <taxon>Campylobacterales</taxon>
        <taxon>Helicobacteraceae</taxon>
        <taxon>Helicobacter</taxon>
    </lineage>
</organism>
<protein>
    <recommendedName>
        <fullName evidence="2">Translation initiation factor IF-2</fullName>
    </recommendedName>
</protein>
<proteinExistence type="inferred from homology"/>
<gene>
    <name evidence="2" type="primary">infB</name>
    <name type="ordered locus">Hac_1159</name>
</gene>
<comment type="function">
    <text evidence="2">One of the essential components for the initiation of protein synthesis. Protects formylmethionyl-tRNA from spontaneous hydrolysis and promotes its binding to the 30S ribosomal subunits. Also involved in the hydrolysis of GTP during the formation of the 70S ribosomal complex.</text>
</comment>
<comment type="subcellular location">
    <subcellularLocation>
        <location evidence="2">Cytoplasm</location>
    </subcellularLocation>
</comment>
<comment type="similarity">
    <text evidence="2">Belongs to the TRAFAC class translation factor GTPase superfamily. Classic translation factor GTPase family. IF-2 subfamily.</text>
</comment>
<name>IF2_HELAH</name>
<keyword id="KW-0963">Cytoplasm</keyword>
<keyword id="KW-0342">GTP-binding</keyword>
<keyword id="KW-0396">Initiation factor</keyword>
<keyword id="KW-0547">Nucleotide-binding</keyword>
<keyword id="KW-0648">Protein biosynthesis</keyword>
<accession>Q17WQ8</accession>